<sequence length="200" mass="22412">MSDYELDPLPYEYDALEPHISEQVLTWHHDTHHQGYVNGWNAAEETLAENREAGEFGSSAGALRNVTHNGSGHILHDLFWQNMSPEGGDEPEGALAERIAEDFGSYEAWKGEFEAAAGAAGGWALLVYDSFSNQLRNVVVDKHDQGALWGSHPILALDVWEHSYYHDYGPARGDFVSAFFEVVDWDEPAARYEQAVELFE</sequence>
<evidence type="ECO:0000250" key="1"/>
<evidence type="ECO:0000305" key="2"/>
<geneLocation type="plasmid">
    <name>pHV4</name>
</geneLocation>
<protein>
    <recommendedName>
        <fullName>Superoxide dismutase [Mn] 1</fullName>
        <ecNumber>1.15.1.1</ecNumber>
    </recommendedName>
</protein>
<organism>
    <name type="scientific">Haloferax volcanii (strain ATCC 29605 / DSM 3757 / JCM 8879 / NBRC 14742 / NCIMB 2012 / VKM B-1768 / DS2)</name>
    <name type="common">Halobacterium volcanii</name>
    <dbReference type="NCBI Taxonomy" id="309800"/>
    <lineage>
        <taxon>Archaea</taxon>
        <taxon>Methanobacteriati</taxon>
        <taxon>Methanobacteriota</taxon>
        <taxon>Stenosarchaea group</taxon>
        <taxon>Halobacteria</taxon>
        <taxon>Halobacteriales</taxon>
        <taxon>Haloferacaceae</taxon>
        <taxon>Haloferax</taxon>
    </lineage>
</organism>
<keyword id="KW-0464">Manganese</keyword>
<keyword id="KW-0479">Metal-binding</keyword>
<keyword id="KW-0560">Oxidoreductase</keyword>
<keyword id="KW-0614">Plasmid</keyword>
<keyword id="KW-1185">Reference proteome</keyword>
<comment type="function">
    <text>Destroys superoxide anion radicals which are normally produced within the cells and which are toxic to biological systems.</text>
</comment>
<comment type="catalytic activity">
    <reaction>
        <text>2 superoxide + 2 H(+) = H2O2 + O2</text>
        <dbReference type="Rhea" id="RHEA:20696"/>
        <dbReference type="ChEBI" id="CHEBI:15378"/>
        <dbReference type="ChEBI" id="CHEBI:15379"/>
        <dbReference type="ChEBI" id="CHEBI:16240"/>
        <dbReference type="ChEBI" id="CHEBI:18421"/>
        <dbReference type="EC" id="1.15.1.1"/>
    </reaction>
</comment>
<comment type="cofactor">
    <cofactor evidence="1">
        <name>Mn(2+)</name>
        <dbReference type="ChEBI" id="CHEBI:29035"/>
    </cofactor>
    <text evidence="1">Binds 1 Mn(2+) ion per subunit.</text>
</comment>
<comment type="similarity">
    <text evidence="2">Belongs to the iron/manganese superoxide dismutase family.</text>
</comment>
<name>SODM1_HALVD</name>
<gene>
    <name type="primary">sod1</name>
    <name type="ordered locus">HVO_A0475</name>
</gene>
<feature type="chain" id="PRO_0000160116" description="Superoxide dismutase [Mn] 1">
    <location>
        <begin position="1"/>
        <end position="200"/>
    </location>
</feature>
<feature type="binding site" evidence="1">
    <location>
        <position position="29"/>
    </location>
    <ligand>
        <name>Mn(2+)</name>
        <dbReference type="ChEBI" id="CHEBI:29035"/>
    </ligand>
</feature>
<feature type="binding site" evidence="1">
    <location>
        <position position="76"/>
    </location>
    <ligand>
        <name>Mn(2+)</name>
        <dbReference type="ChEBI" id="CHEBI:29035"/>
    </ligand>
</feature>
<feature type="binding site" evidence="1">
    <location>
        <position position="158"/>
    </location>
    <ligand>
        <name>Mn(2+)</name>
        <dbReference type="ChEBI" id="CHEBI:29035"/>
    </ligand>
</feature>
<feature type="binding site" evidence="1">
    <location>
        <position position="162"/>
    </location>
    <ligand>
        <name>Mn(2+)</name>
        <dbReference type="ChEBI" id="CHEBI:29035"/>
    </ligand>
</feature>
<feature type="sequence conflict" description="In Ref. 1; AAA73375." evidence="2" ref="1">
    <original>AE</original>
    <variation>DD</variation>
    <location>
        <begin position="43"/>
        <end position="44"/>
    </location>
</feature>
<feature type="sequence conflict" description="In Ref. 1; AAA73375." evidence="2" ref="1">
    <original>L</original>
    <variation>V</variation>
    <location>
        <position position="63"/>
    </location>
</feature>
<feature type="sequence conflict" description="In Ref. 1; AAA73375." evidence="2" ref="1">
    <original>A</original>
    <variation>L</variation>
    <location>
        <position position="94"/>
    </location>
</feature>
<feature type="sequence conflict" description="In Ref. 1; AAA73375." evidence="2" ref="1">
    <original>G</original>
    <variation>A</variation>
    <location>
        <position position="121"/>
    </location>
</feature>
<reference key="1">
    <citation type="journal article" date="1993" name="J. Bacteriol.">
        <title>Characterization of paralogous and orthologous members of the superoxide dismutase gene family from genera of the halophilic archaebacteria.</title>
        <authorList>
            <person name="Joshi P.B."/>
            <person name="Dennis P.P."/>
        </authorList>
    </citation>
    <scope>NUCLEOTIDE SEQUENCE [GENOMIC DNA]</scope>
    <source>
        <strain>ATCC 29605 / DSM 3757 / JCM 8879 / NBRC 14742 / NCIMB 2012 / VKM B-1768 / DS2</strain>
    </source>
</reference>
<reference key="2">
    <citation type="journal article" date="2010" name="PLoS ONE">
        <title>The complete genome sequence of Haloferax volcanii DS2, a model archaeon.</title>
        <authorList>
            <person name="Hartman A.L."/>
            <person name="Norais C."/>
            <person name="Badger J.H."/>
            <person name="Delmas S."/>
            <person name="Haldenby S."/>
            <person name="Madupu R."/>
            <person name="Robinson J."/>
            <person name="Khouri H."/>
            <person name="Ren Q."/>
            <person name="Lowe T.M."/>
            <person name="Maupin-Furlow J."/>
            <person name="Pohlschroder M."/>
            <person name="Daniels C."/>
            <person name="Pfeiffer F."/>
            <person name="Allers T."/>
            <person name="Eisen J.A."/>
        </authorList>
    </citation>
    <scope>NUCLEOTIDE SEQUENCE [LARGE SCALE GENOMIC DNA]</scope>
    <source>
        <strain>ATCC 29605 / DSM 3757 / JCM 8879 / NBRC 14742 / NCIMB 2012 / VKM B-1768 / DS2</strain>
    </source>
</reference>
<accession>Q03300</accession>
<accession>D4GRE0</accession>
<proteinExistence type="inferred from homology"/>
<dbReference type="EC" id="1.15.1.1"/>
<dbReference type="EMBL" id="M97486">
    <property type="protein sequence ID" value="AAA73375.1"/>
    <property type="molecule type" value="Genomic_DNA"/>
</dbReference>
<dbReference type="EMBL" id="CP001955">
    <property type="protein sequence ID" value="ADE01978.1"/>
    <property type="molecule type" value="Genomic_DNA"/>
</dbReference>
<dbReference type="PIR" id="T50045">
    <property type="entry name" value="T50045"/>
</dbReference>
<dbReference type="RefSeq" id="WP_013035130.1">
    <property type="nucleotide sequence ID" value="NC_013966.1"/>
</dbReference>
<dbReference type="SMR" id="Q03300"/>
<dbReference type="PaxDb" id="309800-C498_00220"/>
<dbReference type="EnsemblBacteria" id="ADE01978">
    <property type="protein sequence ID" value="ADE01978"/>
    <property type="gene ID" value="HVO_A0475"/>
</dbReference>
<dbReference type="GeneID" id="8923864"/>
<dbReference type="KEGG" id="hvo:HVO_A0475"/>
<dbReference type="eggNOG" id="arCOG04147">
    <property type="taxonomic scope" value="Archaea"/>
</dbReference>
<dbReference type="HOGENOM" id="CLU_031625_2_0_2"/>
<dbReference type="OrthoDB" id="32917at2157"/>
<dbReference type="Proteomes" id="UP000008243">
    <property type="component" value="Plasmid pHV4"/>
</dbReference>
<dbReference type="GO" id="GO:0046872">
    <property type="term" value="F:metal ion binding"/>
    <property type="evidence" value="ECO:0007669"/>
    <property type="project" value="UniProtKB-KW"/>
</dbReference>
<dbReference type="GO" id="GO:0004784">
    <property type="term" value="F:superoxide dismutase activity"/>
    <property type="evidence" value="ECO:0007669"/>
    <property type="project" value="UniProtKB-EC"/>
</dbReference>
<dbReference type="FunFam" id="3.55.40.20:FF:000004">
    <property type="entry name" value="Superoxide dismutase [Fe]"/>
    <property type="match status" value="1"/>
</dbReference>
<dbReference type="Gene3D" id="1.10.287.990">
    <property type="entry name" value="Fe,Mn superoxide dismutase (SOD) domain"/>
    <property type="match status" value="1"/>
</dbReference>
<dbReference type="Gene3D" id="3.55.40.20">
    <property type="entry name" value="Iron/manganese superoxide dismutase, C-terminal domain"/>
    <property type="match status" value="1"/>
</dbReference>
<dbReference type="InterPro" id="IPR050265">
    <property type="entry name" value="Fe/Mn_Superoxide_Dismutase"/>
</dbReference>
<dbReference type="InterPro" id="IPR001189">
    <property type="entry name" value="Mn/Fe_SOD"/>
</dbReference>
<dbReference type="InterPro" id="IPR019833">
    <property type="entry name" value="Mn/Fe_SOD_BS"/>
</dbReference>
<dbReference type="InterPro" id="IPR019832">
    <property type="entry name" value="Mn/Fe_SOD_C"/>
</dbReference>
<dbReference type="InterPro" id="IPR019831">
    <property type="entry name" value="Mn/Fe_SOD_N"/>
</dbReference>
<dbReference type="InterPro" id="IPR036324">
    <property type="entry name" value="Mn/Fe_SOD_N_sf"/>
</dbReference>
<dbReference type="InterPro" id="IPR036314">
    <property type="entry name" value="SOD_C_sf"/>
</dbReference>
<dbReference type="InterPro" id="IPR054865">
    <property type="entry name" value="Superox_dis_Halo"/>
</dbReference>
<dbReference type="NCBIfam" id="NF041312">
    <property type="entry name" value="Superox_dis_Halo"/>
    <property type="match status" value="1"/>
</dbReference>
<dbReference type="PANTHER" id="PTHR11404">
    <property type="entry name" value="SUPEROXIDE DISMUTASE 2"/>
    <property type="match status" value="1"/>
</dbReference>
<dbReference type="PANTHER" id="PTHR11404:SF6">
    <property type="entry name" value="SUPEROXIDE DISMUTASE [MN], MITOCHONDRIAL"/>
    <property type="match status" value="1"/>
</dbReference>
<dbReference type="Pfam" id="PF02777">
    <property type="entry name" value="Sod_Fe_C"/>
    <property type="match status" value="1"/>
</dbReference>
<dbReference type="Pfam" id="PF00081">
    <property type="entry name" value="Sod_Fe_N"/>
    <property type="match status" value="1"/>
</dbReference>
<dbReference type="PIRSF" id="PIRSF000349">
    <property type="entry name" value="SODismutase"/>
    <property type="match status" value="1"/>
</dbReference>
<dbReference type="PRINTS" id="PR01703">
    <property type="entry name" value="MNSODISMTASE"/>
</dbReference>
<dbReference type="SUPFAM" id="SSF54719">
    <property type="entry name" value="Fe,Mn superoxide dismutase (SOD), C-terminal domain"/>
    <property type="match status" value="1"/>
</dbReference>
<dbReference type="SUPFAM" id="SSF46609">
    <property type="entry name" value="Fe,Mn superoxide dismutase (SOD), N-terminal domain"/>
    <property type="match status" value="1"/>
</dbReference>
<dbReference type="PROSITE" id="PS00088">
    <property type="entry name" value="SOD_MN"/>
    <property type="match status" value="1"/>
</dbReference>